<keyword id="KW-0002">3D-structure</keyword>
<keyword id="KW-0521">NADP</keyword>
<keyword id="KW-0560">Oxidoreductase</keyword>
<keyword id="KW-1185">Reference proteome</keyword>
<accession>P9WQA5</accession>
<accession>L0TBF0</accession>
<accession>P95124</accession>
<accession>Q7D6C1</accession>
<organism>
    <name type="scientific">Mycobacterium tuberculosis (strain ATCC 25618 / H37Rv)</name>
    <dbReference type="NCBI Taxonomy" id="83332"/>
    <lineage>
        <taxon>Bacteria</taxon>
        <taxon>Bacillati</taxon>
        <taxon>Actinomycetota</taxon>
        <taxon>Actinomycetes</taxon>
        <taxon>Mycobacteriales</taxon>
        <taxon>Mycobacteriaceae</taxon>
        <taxon>Mycobacterium</taxon>
        <taxon>Mycobacterium tuberculosis complex</taxon>
    </lineage>
</organism>
<reference key="1">
    <citation type="journal article" date="1998" name="Nature">
        <title>Deciphering the biology of Mycobacterium tuberculosis from the complete genome sequence.</title>
        <authorList>
            <person name="Cole S.T."/>
            <person name="Brosch R."/>
            <person name="Parkhill J."/>
            <person name="Garnier T."/>
            <person name="Churcher C.M."/>
            <person name="Harris D.E."/>
            <person name="Gordon S.V."/>
            <person name="Eiglmeier K."/>
            <person name="Gas S."/>
            <person name="Barry C.E. III"/>
            <person name="Tekaia F."/>
            <person name="Badcock K."/>
            <person name="Basham D."/>
            <person name="Brown D."/>
            <person name="Chillingworth T."/>
            <person name="Connor R."/>
            <person name="Davies R.M."/>
            <person name="Devlin K."/>
            <person name="Feltwell T."/>
            <person name="Gentles S."/>
            <person name="Hamlin N."/>
            <person name="Holroyd S."/>
            <person name="Hornsby T."/>
            <person name="Jagels K."/>
            <person name="Krogh A."/>
            <person name="McLean J."/>
            <person name="Moule S."/>
            <person name="Murphy L.D."/>
            <person name="Oliver S."/>
            <person name="Osborne J."/>
            <person name="Quail M.A."/>
            <person name="Rajandream M.A."/>
            <person name="Rogers J."/>
            <person name="Rutter S."/>
            <person name="Seeger K."/>
            <person name="Skelton S."/>
            <person name="Squares S."/>
            <person name="Squares R."/>
            <person name="Sulston J.E."/>
            <person name="Taylor K."/>
            <person name="Whitehead S."/>
            <person name="Barrell B.G."/>
        </authorList>
    </citation>
    <scope>NUCLEOTIDE SEQUENCE [LARGE SCALE GENOMIC DNA]</scope>
    <source>
        <strain>ATCC 25618 / H37Rv</strain>
    </source>
</reference>
<reference key="2">
    <citation type="journal article" date="2010" name="J. Mol. Biol.">
        <title>Crystal structure and comparative functional analyses of a Mycobacterium aldo-keto reductase.</title>
        <authorList>
            <person name="Scoble J."/>
            <person name="McAlister A.D."/>
            <person name="Fulton Z."/>
            <person name="Troy S."/>
            <person name="Byres E."/>
            <person name="Vivian J.P."/>
            <person name="Brammananth R."/>
            <person name="Wilce M.C."/>
            <person name="Le Nours J."/>
            <person name="Zaker-Tabrizi L."/>
            <person name="Coppel R.L."/>
            <person name="Crellin P.K."/>
            <person name="Rossjohn J."/>
            <person name="Beddoe T."/>
        </authorList>
    </citation>
    <scope>FUNCTION</scope>
    <scope>BIOPHYSICOCHEMICAL PROPERTIES</scope>
    <scope>ACTIVITY REGULATION</scope>
</reference>
<reference key="3">
    <citation type="journal article" date="2011" name="Mol. Cell. Proteomics">
        <title>Proteogenomic analysis of Mycobacterium tuberculosis by high resolution mass spectrometry.</title>
        <authorList>
            <person name="Kelkar D.S."/>
            <person name="Kumar D."/>
            <person name="Kumar P."/>
            <person name="Balakrishnan L."/>
            <person name="Muthusamy B."/>
            <person name="Yadav A.K."/>
            <person name="Shrivastava P."/>
            <person name="Marimuthu A."/>
            <person name="Anand S."/>
            <person name="Sundaram H."/>
            <person name="Kingsbury R."/>
            <person name="Harsha H.C."/>
            <person name="Nair B."/>
            <person name="Prasad T.S."/>
            <person name="Chauhan D.S."/>
            <person name="Katoch K."/>
            <person name="Katoch V.M."/>
            <person name="Kumar P."/>
            <person name="Chaerkady R."/>
            <person name="Ramachandran S."/>
            <person name="Dash D."/>
            <person name="Pandey A."/>
        </authorList>
    </citation>
    <scope>IDENTIFICATION BY MASS SPECTROMETRY [LARGE SCALE ANALYSIS]</scope>
    <source>
        <strain>ATCC 25618 / H37Rv</strain>
    </source>
</reference>
<reference key="4">
    <citation type="journal article" date="2022" name="Infect. Genet. Evol.">
        <title>Recognition of specific immunogenic antigens with potential diagnostic value in multi-drug resistant Mycobacterium tuberculosis inducing humoral immunity in MDR-TB patients.</title>
        <authorList>
            <person name="Hadizadeh Tasbiti A."/>
            <person name="Badmasti F."/>
            <person name="Siadat S.D."/>
            <person name="Fateh A."/>
            <person name="Yari F."/>
            <person name="Ghzanfari Jajin M."/>
            <person name="Yari S."/>
        </authorList>
    </citation>
    <scope>IDENTIFICATION AS AN IMMUNOGENIC PROTEIN</scope>
</reference>
<reference evidence="8" key="5">
    <citation type="journal article" date="2014" name="Acta Crystallogr. F Struct. Biol. Commun.">
        <title>A structural characterization of the isoniazid Mycobacterium tuberculosis drug target, Rv2971, in its unliganded form.</title>
        <authorList>
            <person name="Shahine A."/>
            <person name="Prasetyoputri A."/>
            <person name="Rossjohn J."/>
            <person name="Beddoe T."/>
        </authorList>
    </citation>
    <scope>X-RAY CRYSTALLOGRAPHY (1.60 ANGSTROMS) OF 2-282</scope>
    <scope>SUBUNIT</scope>
</reference>
<feature type="chain" id="PRO_0000380747" description="Aldo-keto reductase Rv2971">
    <location>
        <begin position="1"/>
        <end position="282"/>
    </location>
</feature>
<feature type="active site" description="Proton donor" evidence="2">
    <location>
        <position position="57"/>
    </location>
</feature>
<feature type="binding site" evidence="1">
    <location>
        <position position="197"/>
    </location>
    <ligand>
        <name>NADPH</name>
        <dbReference type="ChEBI" id="CHEBI:57783"/>
    </ligand>
</feature>
<feature type="binding site" evidence="1">
    <location>
        <position position="199"/>
    </location>
    <ligand>
        <name>NADPH</name>
        <dbReference type="ChEBI" id="CHEBI:57783"/>
    </ligand>
</feature>
<feature type="binding site" evidence="1">
    <location>
        <position position="235"/>
    </location>
    <ligand>
        <name>NADPH</name>
        <dbReference type="ChEBI" id="CHEBI:57783"/>
    </ligand>
</feature>
<feature type="binding site" evidence="1">
    <location>
        <position position="237"/>
    </location>
    <ligand>
        <name>NADPH</name>
        <dbReference type="ChEBI" id="CHEBI:57783"/>
    </ligand>
</feature>
<feature type="binding site" evidence="1">
    <location>
        <position position="238"/>
    </location>
    <ligand>
        <name>NADPH</name>
        <dbReference type="ChEBI" id="CHEBI:57783"/>
    </ligand>
</feature>
<feature type="binding site" evidence="1">
    <location>
        <position position="239"/>
    </location>
    <ligand>
        <name>NADPH</name>
        <dbReference type="ChEBI" id="CHEBI:57783"/>
    </ligand>
</feature>
<feature type="binding site" evidence="1">
    <location>
        <position position="243"/>
    </location>
    <ligand>
        <name>NADPH</name>
        <dbReference type="ChEBI" id="CHEBI:57783"/>
    </ligand>
</feature>
<feature type="binding site" evidence="1">
    <location>
        <position position="246"/>
    </location>
    <ligand>
        <name>NADPH</name>
        <dbReference type="ChEBI" id="CHEBI:57783"/>
    </ligand>
</feature>
<feature type="binding site" evidence="1">
    <location>
        <position position="247"/>
    </location>
    <ligand>
        <name>NADPH</name>
        <dbReference type="ChEBI" id="CHEBI:57783"/>
    </ligand>
</feature>
<feature type="binding site" evidence="1">
    <location>
        <position position="273"/>
    </location>
    <ligand>
        <name>NADPH</name>
        <dbReference type="ChEBI" id="CHEBI:57783"/>
    </ligand>
</feature>
<feature type="strand" evidence="9">
    <location>
        <begin position="12"/>
        <end position="14"/>
    </location>
</feature>
<feature type="strand" evidence="9">
    <location>
        <begin position="20"/>
        <end position="27"/>
    </location>
</feature>
<feature type="helix" evidence="9">
    <location>
        <begin position="33"/>
        <end position="45"/>
    </location>
</feature>
<feature type="strand" evidence="9">
    <location>
        <begin position="50"/>
        <end position="52"/>
    </location>
</feature>
<feature type="helix" evidence="9">
    <location>
        <begin position="55"/>
        <end position="57"/>
    </location>
</feature>
<feature type="helix" evidence="9">
    <location>
        <begin position="60"/>
        <end position="69"/>
    </location>
</feature>
<feature type="helix" evidence="9">
    <location>
        <begin position="74"/>
        <end position="76"/>
    </location>
</feature>
<feature type="strand" evidence="9">
    <location>
        <begin position="78"/>
        <end position="83"/>
    </location>
</feature>
<feature type="helix" evidence="9">
    <location>
        <begin position="85"/>
        <end position="87"/>
    </location>
</feature>
<feature type="helix" evidence="9">
    <location>
        <begin position="90"/>
        <end position="104"/>
    </location>
</feature>
<feature type="strand" evidence="9">
    <location>
        <begin position="109"/>
        <end position="115"/>
    </location>
</feature>
<feature type="turn" evidence="9">
    <location>
        <begin position="119"/>
        <end position="121"/>
    </location>
</feature>
<feature type="helix" evidence="9">
    <location>
        <begin position="124"/>
        <end position="136"/>
    </location>
</feature>
<feature type="strand" evidence="9">
    <location>
        <begin position="139"/>
        <end position="147"/>
    </location>
</feature>
<feature type="helix" evidence="9">
    <location>
        <begin position="150"/>
        <end position="160"/>
    </location>
</feature>
<feature type="strand" evidence="9">
    <location>
        <begin position="165"/>
        <end position="170"/>
    </location>
</feature>
<feature type="helix" evidence="9">
    <location>
        <begin position="178"/>
        <end position="186"/>
    </location>
</feature>
<feature type="strand" evidence="9">
    <location>
        <begin position="190"/>
        <end position="194"/>
    </location>
</feature>
<feature type="helix" evidence="9">
    <location>
        <begin position="198"/>
        <end position="200"/>
    </location>
</feature>
<feature type="turn" evidence="9">
    <location>
        <begin position="201"/>
        <end position="204"/>
    </location>
</feature>
<feature type="helix" evidence="9">
    <location>
        <begin position="206"/>
        <end position="215"/>
    </location>
</feature>
<feature type="helix" evidence="9">
    <location>
        <begin position="219"/>
        <end position="229"/>
    </location>
</feature>
<feature type="strand" evidence="9">
    <location>
        <begin position="233"/>
        <end position="238"/>
    </location>
</feature>
<feature type="helix" evidence="9">
    <location>
        <begin position="241"/>
        <end position="248"/>
    </location>
</feature>
<feature type="helix" evidence="9">
    <location>
        <begin position="257"/>
        <end position="264"/>
    </location>
</feature>
<feature type="turn" evidence="9">
    <location>
        <begin position="276"/>
        <end position="278"/>
    </location>
</feature>
<gene>
    <name type="ordered locus">Rv2971</name>
</gene>
<sequence>MTGESGAAAAPSITLNDEHTMPVLGLGVAELSDDETERAVSAALEIGCRLIDTAYAYGNEAAVGRAIAASGVAREELFVTTKLATPDQGFTRSQEACRASLDRLGLDYVDLYLIHWPAPPVGKYVDAWGGMIQSRGEGHARSIGVSNFTAENIENLIDLTFVTPAVNQIELHPLLNQDELRKANAQHTVVTQSYCPLALGRLLDNPTVTSIASEYVKTPAQVLLRWNLQLGNAVVVRSARPERIASNFDVFDFELAAEHMDALGGLNDGTRVREDPLTYAGT</sequence>
<proteinExistence type="evidence at protein level"/>
<comment type="function">
    <text evidence="3">Catalyzes the NADPH-dependent reduction of dicarbonyls (PubMed:20188740). Exhibits narrow substrate specificity, with preferential activity against the dicarbonyl substrates methylglyoxal and phenylglyoxal (PubMed:20188740). May play an important role in the detoxification of methylglyoxal (PubMed:20188740).</text>
</comment>
<comment type="activity regulation">
    <text evidence="3">Inhibited by the antituberculosis drug isoniazid (INH).</text>
</comment>
<comment type="biophysicochemical properties">
    <kinetics>
        <KM evidence="3">8.45 mM for methylglyoxal</KM>
        <KM evidence="3">12.32 mM for phenylglyoxal</KM>
        <text evidence="3">kcat is 0.56 sec(-1) with methylglyoxal as substrate. kcat is 0.22 sec(-1) with phenylglyoxal as substrate.</text>
    </kinetics>
</comment>
<comment type="subunit">
    <text evidence="4">Monomer.</text>
</comment>
<comment type="miscellaneous">
    <text evidence="5">Identified as a multidrug-resistant tuberculosis (MDRTB) immunogenic protein.</text>
</comment>
<comment type="similarity">
    <text evidence="7">Belongs to the aldo/keto reductase family.</text>
</comment>
<dbReference type="EC" id="1.1.1.-" evidence="3"/>
<dbReference type="EMBL" id="AL123456">
    <property type="protein sequence ID" value="CCP45776.1"/>
    <property type="molecule type" value="Genomic_DNA"/>
</dbReference>
<dbReference type="PIR" id="H70671">
    <property type="entry name" value="H70671"/>
</dbReference>
<dbReference type="RefSeq" id="NP_217487.1">
    <property type="nucleotide sequence ID" value="NC_000962.3"/>
</dbReference>
<dbReference type="RefSeq" id="WP_003899563.1">
    <property type="nucleotide sequence ID" value="NZ_NVQJ01000015.1"/>
</dbReference>
<dbReference type="PDB" id="4OTK">
    <property type="method" value="X-ray"/>
    <property type="resolution" value="1.60 A"/>
    <property type="chains" value="A=2-282"/>
</dbReference>
<dbReference type="PDBsum" id="4OTK"/>
<dbReference type="SMR" id="P9WQA5"/>
<dbReference type="FunCoup" id="P9WQA5">
    <property type="interactions" value="335"/>
</dbReference>
<dbReference type="STRING" id="83332.Rv2971"/>
<dbReference type="PaxDb" id="83332-Rv2971"/>
<dbReference type="DNASU" id="887275"/>
<dbReference type="GeneID" id="887275"/>
<dbReference type="KEGG" id="mtu:Rv2971"/>
<dbReference type="KEGG" id="mtv:RVBD_2971"/>
<dbReference type="TubercuList" id="Rv2971"/>
<dbReference type="eggNOG" id="COG0656">
    <property type="taxonomic scope" value="Bacteria"/>
</dbReference>
<dbReference type="InParanoid" id="P9WQA5"/>
<dbReference type="OrthoDB" id="9804790at2"/>
<dbReference type="PhylomeDB" id="P9WQA5"/>
<dbReference type="EvolutionaryTrace" id="P9WQA5"/>
<dbReference type="Proteomes" id="UP000001584">
    <property type="component" value="Chromosome"/>
</dbReference>
<dbReference type="GO" id="GO:0005829">
    <property type="term" value="C:cytosol"/>
    <property type="evidence" value="ECO:0000318"/>
    <property type="project" value="GO_Central"/>
</dbReference>
<dbReference type="GO" id="GO:0009274">
    <property type="term" value="C:peptidoglycan-based cell wall"/>
    <property type="evidence" value="ECO:0007005"/>
    <property type="project" value="MTBBASE"/>
</dbReference>
<dbReference type="GO" id="GO:0005886">
    <property type="term" value="C:plasma membrane"/>
    <property type="evidence" value="ECO:0007005"/>
    <property type="project" value="MTBBASE"/>
</dbReference>
<dbReference type="GO" id="GO:0004032">
    <property type="term" value="F:aldose reductase (NADPH) activity"/>
    <property type="evidence" value="ECO:0000318"/>
    <property type="project" value="GO_Central"/>
</dbReference>
<dbReference type="CDD" id="cd19134">
    <property type="entry name" value="AKR_AKR5H1"/>
    <property type="match status" value="1"/>
</dbReference>
<dbReference type="FunFam" id="3.20.20.100:FF:000002">
    <property type="entry name" value="2,5-diketo-D-gluconic acid reductase A"/>
    <property type="match status" value="1"/>
</dbReference>
<dbReference type="Gene3D" id="3.20.20.100">
    <property type="entry name" value="NADP-dependent oxidoreductase domain"/>
    <property type="match status" value="1"/>
</dbReference>
<dbReference type="InterPro" id="IPR020471">
    <property type="entry name" value="AKR"/>
</dbReference>
<dbReference type="InterPro" id="IPR018170">
    <property type="entry name" value="Aldo/ket_reductase_CS"/>
</dbReference>
<dbReference type="InterPro" id="IPR023210">
    <property type="entry name" value="NADP_OxRdtase_dom"/>
</dbReference>
<dbReference type="InterPro" id="IPR036812">
    <property type="entry name" value="NADP_OxRdtase_dom_sf"/>
</dbReference>
<dbReference type="PANTHER" id="PTHR43827">
    <property type="entry name" value="2,5-DIKETO-D-GLUCONIC ACID REDUCTASE"/>
    <property type="match status" value="1"/>
</dbReference>
<dbReference type="PANTHER" id="PTHR43827:SF3">
    <property type="entry name" value="NADP-DEPENDENT OXIDOREDUCTASE DOMAIN-CONTAINING PROTEIN"/>
    <property type="match status" value="1"/>
</dbReference>
<dbReference type="Pfam" id="PF00248">
    <property type="entry name" value="Aldo_ket_red"/>
    <property type="match status" value="1"/>
</dbReference>
<dbReference type="PIRSF" id="PIRSF000097">
    <property type="entry name" value="AKR"/>
    <property type="match status" value="1"/>
</dbReference>
<dbReference type="PRINTS" id="PR00069">
    <property type="entry name" value="ALDKETRDTASE"/>
</dbReference>
<dbReference type="SUPFAM" id="SSF51430">
    <property type="entry name" value="NAD(P)-linked oxidoreductase"/>
    <property type="match status" value="1"/>
</dbReference>
<dbReference type="PROSITE" id="PS00062">
    <property type="entry name" value="ALDOKETO_REDUCTASE_2"/>
    <property type="match status" value="1"/>
</dbReference>
<evidence type="ECO:0000250" key="1">
    <source>
        <dbReference type="UniProtKB" id="A0QV09"/>
    </source>
</evidence>
<evidence type="ECO:0000250" key="2">
    <source>
        <dbReference type="UniProtKB" id="P80874"/>
    </source>
</evidence>
<evidence type="ECO:0000269" key="3">
    <source>
    </source>
</evidence>
<evidence type="ECO:0000269" key="4">
    <source>
    </source>
</evidence>
<evidence type="ECO:0000269" key="5">
    <source>
    </source>
</evidence>
<evidence type="ECO:0000303" key="6">
    <source>
    </source>
</evidence>
<evidence type="ECO:0000305" key="7"/>
<evidence type="ECO:0007744" key="8">
    <source>
        <dbReference type="PDB" id="4OTK"/>
    </source>
</evidence>
<evidence type="ECO:0007829" key="9">
    <source>
        <dbReference type="PDB" id="4OTK"/>
    </source>
</evidence>
<name>Y2971_MYCTU</name>
<protein>
    <recommendedName>
        <fullName evidence="7">Aldo-keto reductase Rv2971</fullName>
        <shortName evidence="6">AKR</shortName>
        <ecNumber evidence="3">1.1.1.-</ecNumber>
    </recommendedName>
</protein>